<name>RL31_SYNPW</name>
<feature type="chain" id="PRO_1000126749" description="Large ribosomal subunit protein bL31">
    <location>
        <begin position="1"/>
        <end position="85"/>
    </location>
</feature>
<feature type="region of interest" description="Disordered" evidence="2">
    <location>
        <begin position="65"/>
        <end position="85"/>
    </location>
</feature>
<feature type="compositionally biased region" description="Basic and acidic residues" evidence="2">
    <location>
        <begin position="73"/>
        <end position="85"/>
    </location>
</feature>
<evidence type="ECO:0000255" key="1">
    <source>
        <dbReference type="HAMAP-Rule" id="MF_00501"/>
    </source>
</evidence>
<evidence type="ECO:0000256" key="2">
    <source>
        <dbReference type="SAM" id="MobiDB-lite"/>
    </source>
</evidence>
<evidence type="ECO:0000305" key="3"/>
<keyword id="KW-1185">Reference proteome</keyword>
<keyword id="KW-0687">Ribonucleoprotein</keyword>
<keyword id="KW-0689">Ribosomal protein</keyword>
<keyword id="KW-0694">RNA-binding</keyword>
<keyword id="KW-0699">rRNA-binding</keyword>
<comment type="function">
    <text evidence="1">Binds the 23S rRNA.</text>
</comment>
<comment type="subunit">
    <text evidence="1">Part of the 50S ribosomal subunit.</text>
</comment>
<comment type="similarity">
    <text evidence="1">Belongs to the bacterial ribosomal protein bL31 family. Type A subfamily.</text>
</comment>
<accession>A5GIR7</accession>
<proteinExistence type="inferred from homology"/>
<organism>
    <name type="scientific">Synechococcus sp. (strain WH7803)</name>
    <dbReference type="NCBI Taxonomy" id="32051"/>
    <lineage>
        <taxon>Bacteria</taxon>
        <taxon>Bacillati</taxon>
        <taxon>Cyanobacteriota</taxon>
        <taxon>Cyanophyceae</taxon>
        <taxon>Synechococcales</taxon>
        <taxon>Synechococcaceae</taxon>
        <taxon>Synechococcus</taxon>
    </lineage>
</organism>
<reference key="1">
    <citation type="submission" date="2006-05" db="EMBL/GenBank/DDBJ databases">
        <authorList>
            <consortium name="Genoscope"/>
        </authorList>
    </citation>
    <scope>NUCLEOTIDE SEQUENCE [LARGE SCALE GENOMIC DNA]</scope>
    <source>
        <strain>WH7803</strain>
    </source>
</reference>
<sequence length="85" mass="9307">MPKPEIHPTWYPDAKVICNGEVVMTTGSTQPEIHVDVWSGNHPFFTGTQKILDTEGRVDRFMRKYGMGGAGKAGEDKKAGDKADA</sequence>
<gene>
    <name evidence="1" type="primary">rpmE</name>
    <name evidence="1" type="synonym">rpl31</name>
    <name type="ordered locus">SynWH7803_0406</name>
</gene>
<protein>
    <recommendedName>
        <fullName evidence="1">Large ribosomal subunit protein bL31</fullName>
    </recommendedName>
    <alternativeName>
        <fullName evidence="3">50S ribosomal protein L31</fullName>
    </alternativeName>
</protein>
<dbReference type="EMBL" id="CT971583">
    <property type="protein sequence ID" value="CAK22832.1"/>
    <property type="molecule type" value="Genomic_DNA"/>
</dbReference>
<dbReference type="STRING" id="32051.SynWH7803_0406"/>
<dbReference type="KEGG" id="syx:SynWH7803_0406"/>
<dbReference type="eggNOG" id="COG0254">
    <property type="taxonomic scope" value="Bacteria"/>
</dbReference>
<dbReference type="HOGENOM" id="CLU_114306_1_2_3"/>
<dbReference type="OrthoDB" id="9803251at2"/>
<dbReference type="Proteomes" id="UP000001566">
    <property type="component" value="Chromosome"/>
</dbReference>
<dbReference type="GO" id="GO:1990904">
    <property type="term" value="C:ribonucleoprotein complex"/>
    <property type="evidence" value="ECO:0007669"/>
    <property type="project" value="UniProtKB-KW"/>
</dbReference>
<dbReference type="GO" id="GO:0005840">
    <property type="term" value="C:ribosome"/>
    <property type="evidence" value="ECO:0007669"/>
    <property type="project" value="UniProtKB-KW"/>
</dbReference>
<dbReference type="GO" id="GO:0019843">
    <property type="term" value="F:rRNA binding"/>
    <property type="evidence" value="ECO:0007669"/>
    <property type="project" value="UniProtKB-KW"/>
</dbReference>
<dbReference type="GO" id="GO:0003735">
    <property type="term" value="F:structural constituent of ribosome"/>
    <property type="evidence" value="ECO:0007669"/>
    <property type="project" value="InterPro"/>
</dbReference>
<dbReference type="GO" id="GO:0006412">
    <property type="term" value="P:translation"/>
    <property type="evidence" value="ECO:0007669"/>
    <property type="project" value="UniProtKB-UniRule"/>
</dbReference>
<dbReference type="Gene3D" id="4.10.830.30">
    <property type="entry name" value="Ribosomal protein L31"/>
    <property type="match status" value="1"/>
</dbReference>
<dbReference type="HAMAP" id="MF_00501">
    <property type="entry name" value="Ribosomal_bL31_1"/>
    <property type="match status" value="1"/>
</dbReference>
<dbReference type="InterPro" id="IPR034704">
    <property type="entry name" value="Ribosomal_bL28/bL31-like_sf"/>
</dbReference>
<dbReference type="InterPro" id="IPR002150">
    <property type="entry name" value="Ribosomal_bL31"/>
</dbReference>
<dbReference type="InterPro" id="IPR027491">
    <property type="entry name" value="Ribosomal_bL31_A"/>
</dbReference>
<dbReference type="InterPro" id="IPR042105">
    <property type="entry name" value="Ribosomal_bL31_sf"/>
</dbReference>
<dbReference type="NCBIfam" id="TIGR00105">
    <property type="entry name" value="L31"/>
    <property type="match status" value="1"/>
</dbReference>
<dbReference type="NCBIfam" id="NF001809">
    <property type="entry name" value="PRK00528.1"/>
    <property type="match status" value="1"/>
</dbReference>
<dbReference type="PANTHER" id="PTHR33280">
    <property type="entry name" value="50S RIBOSOMAL PROTEIN L31, CHLOROPLASTIC"/>
    <property type="match status" value="1"/>
</dbReference>
<dbReference type="PANTHER" id="PTHR33280:SF1">
    <property type="entry name" value="LARGE RIBOSOMAL SUBUNIT PROTEIN BL31C"/>
    <property type="match status" value="1"/>
</dbReference>
<dbReference type="Pfam" id="PF01197">
    <property type="entry name" value="Ribosomal_L31"/>
    <property type="match status" value="1"/>
</dbReference>
<dbReference type="PRINTS" id="PR01249">
    <property type="entry name" value="RIBOSOMALL31"/>
</dbReference>
<dbReference type="SUPFAM" id="SSF143800">
    <property type="entry name" value="L28p-like"/>
    <property type="match status" value="1"/>
</dbReference>
<dbReference type="PROSITE" id="PS01143">
    <property type="entry name" value="RIBOSOMAL_L31"/>
    <property type="match status" value="1"/>
</dbReference>